<protein>
    <recommendedName>
        <fullName>Serine/threonine-protein phosphatase CPPED1</fullName>
        <ecNumber>3.1.3.16</ecNumber>
    </recommendedName>
    <alternativeName>
        <fullName>Calcineurin-like phosphoesterase domain-containing protein 1</fullName>
    </alternativeName>
</protein>
<gene>
    <name type="primary">CPPED1</name>
    <name type="synonym">CSTP1</name>
</gene>
<name>CPPED_PONAB</name>
<keyword id="KW-0963">Cytoplasm</keyword>
<keyword id="KW-0378">Hydrolase</keyword>
<keyword id="KW-0479">Metal-binding</keyword>
<keyword id="KW-0597">Phosphoprotein</keyword>
<keyword id="KW-1185">Reference proteome</keyword>
<feature type="chain" id="PRO_0000320558" description="Serine/threonine-protein phosphatase CPPED1">
    <location>
        <begin position="1"/>
        <end position="314"/>
    </location>
</feature>
<feature type="region of interest" description="Catalytic" evidence="1">
    <location>
        <begin position="47"/>
        <end position="250"/>
    </location>
</feature>
<feature type="binding site" evidence="1">
    <location>
        <position position="53"/>
    </location>
    <ligand>
        <name>a divalent metal cation</name>
        <dbReference type="ChEBI" id="CHEBI:60240"/>
        <label>1</label>
    </ligand>
</feature>
<feature type="binding site" evidence="1">
    <location>
        <position position="90"/>
    </location>
    <ligand>
        <name>a divalent metal cation</name>
        <dbReference type="ChEBI" id="CHEBI:60240"/>
        <label>1</label>
    </ligand>
</feature>
<feature type="binding site" evidence="1">
    <location>
        <position position="90"/>
    </location>
    <ligand>
        <name>a divalent metal cation</name>
        <dbReference type="ChEBI" id="CHEBI:60240"/>
        <label>2</label>
    </ligand>
</feature>
<feature type="binding site" evidence="1">
    <location>
        <position position="127"/>
    </location>
    <ligand>
        <name>a divalent metal cation</name>
        <dbReference type="ChEBI" id="CHEBI:60240"/>
        <label>2</label>
    </ligand>
</feature>
<feature type="binding site" evidence="1">
    <location>
        <position position="247"/>
    </location>
    <ligand>
        <name>a divalent metal cation</name>
        <dbReference type="ChEBI" id="CHEBI:60240"/>
        <label>2</label>
    </ligand>
</feature>
<feature type="modified residue" description="Phosphoserine" evidence="2">
    <location>
        <position position="2"/>
    </location>
</feature>
<feature type="modified residue" description="Phosphoserine" evidence="2">
    <location>
        <position position="294"/>
    </location>
</feature>
<dbReference type="EC" id="3.1.3.16"/>
<dbReference type="EMBL" id="CR858200">
    <property type="protein sequence ID" value="CAH90438.1"/>
    <property type="molecule type" value="mRNA"/>
</dbReference>
<dbReference type="RefSeq" id="NP_001125220.1">
    <property type="nucleotide sequence ID" value="NM_001131748.1"/>
</dbReference>
<dbReference type="SMR" id="Q5RCR9"/>
<dbReference type="FunCoup" id="Q5RCR9">
    <property type="interactions" value="304"/>
</dbReference>
<dbReference type="STRING" id="9601.ENSPPYP00000008049"/>
<dbReference type="Ensembl" id="ENSPPYT00000059620.1">
    <property type="protein sequence ID" value="ENSPPYP00000033218.1"/>
    <property type="gene ID" value="ENSPPYG00000036531.1"/>
</dbReference>
<dbReference type="GeneID" id="100172113"/>
<dbReference type="KEGG" id="pon:100172113"/>
<dbReference type="CTD" id="55313"/>
<dbReference type="eggNOG" id="KOG1378">
    <property type="taxonomic scope" value="Eukaryota"/>
</dbReference>
<dbReference type="GeneTree" id="ENSGT00390000008676"/>
<dbReference type="HOGENOM" id="CLU_077151_0_0_1"/>
<dbReference type="InParanoid" id="Q5RCR9"/>
<dbReference type="OrthoDB" id="45007at2759"/>
<dbReference type="TreeFam" id="TF329406"/>
<dbReference type="Proteomes" id="UP000001595">
    <property type="component" value="Unplaced"/>
</dbReference>
<dbReference type="GO" id="GO:0005737">
    <property type="term" value="C:cytoplasm"/>
    <property type="evidence" value="ECO:0007669"/>
    <property type="project" value="UniProtKB-SubCell"/>
</dbReference>
<dbReference type="GO" id="GO:0046872">
    <property type="term" value="F:metal ion binding"/>
    <property type="evidence" value="ECO:0007669"/>
    <property type="project" value="UniProtKB-KW"/>
</dbReference>
<dbReference type="GO" id="GO:0004722">
    <property type="term" value="F:protein serine/threonine phosphatase activity"/>
    <property type="evidence" value="ECO:0007669"/>
    <property type="project" value="UniProtKB-EC"/>
</dbReference>
<dbReference type="CDD" id="cd07395">
    <property type="entry name" value="MPP_CSTP1"/>
    <property type="match status" value="1"/>
</dbReference>
<dbReference type="FunFam" id="3.60.21.10:FF:000063">
    <property type="entry name" value="Calcineurin-like phosphoesterase domain-containing protein 1"/>
    <property type="match status" value="1"/>
</dbReference>
<dbReference type="Gene3D" id="3.60.21.10">
    <property type="match status" value="1"/>
</dbReference>
<dbReference type="InterPro" id="IPR004843">
    <property type="entry name" value="Calcineurin-like_PHP_ApaH"/>
</dbReference>
<dbReference type="InterPro" id="IPR029052">
    <property type="entry name" value="Metallo-depent_PP-like"/>
</dbReference>
<dbReference type="InterPro" id="IPR041867">
    <property type="entry name" value="MPP_CSTP1"/>
</dbReference>
<dbReference type="InterPro" id="IPR051918">
    <property type="entry name" value="STPP_CPPED1"/>
</dbReference>
<dbReference type="PANTHER" id="PTHR43143">
    <property type="entry name" value="METALLOPHOSPHOESTERASE, CALCINEURIN SUPERFAMILY"/>
    <property type="match status" value="1"/>
</dbReference>
<dbReference type="PANTHER" id="PTHR43143:SF1">
    <property type="entry name" value="SERINE_THREONINE-PROTEIN PHOSPHATASE CPPED1"/>
    <property type="match status" value="1"/>
</dbReference>
<dbReference type="Pfam" id="PF00149">
    <property type="entry name" value="Metallophos"/>
    <property type="match status" value="1"/>
</dbReference>
<dbReference type="SUPFAM" id="SSF56300">
    <property type="entry name" value="Metallo-dependent phosphatases"/>
    <property type="match status" value="1"/>
</dbReference>
<organism>
    <name type="scientific">Pongo abelii</name>
    <name type="common">Sumatran orangutan</name>
    <name type="synonym">Pongo pygmaeus abelii</name>
    <dbReference type="NCBI Taxonomy" id="9601"/>
    <lineage>
        <taxon>Eukaryota</taxon>
        <taxon>Metazoa</taxon>
        <taxon>Chordata</taxon>
        <taxon>Craniata</taxon>
        <taxon>Vertebrata</taxon>
        <taxon>Euteleostomi</taxon>
        <taxon>Mammalia</taxon>
        <taxon>Eutheria</taxon>
        <taxon>Euarchontoglires</taxon>
        <taxon>Primates</taxon>
        <taxon>Haplorrhini</taxon>
        <taxon>Catarrhini</taxon>
        <taxon>Hominidae</taxon>
        <taxon>Pongo</taxon>
    </lineage>
</organism>
<comment type="function">
    <text evidence="1">Protein phosphatase that dephosphorylates AKT family kinase specifically at 'Ser-473', blocking cell cycle progression and promoting cell apoptosis. May play an inhibitory role in glucose uptake by adipocytes (By similarity).</text>
</comment>
<comment type="catalytic activity">
    <reaction>
        <text>O-phospho-L-seryl-[protein] + H2O = L-seryl-[protein] + phosphate</text>
        <dbReference type="Rhea" id="RHEA:20629"/>
        <dbReference type="Rhea" id="RHEA-COMP:9863"/>
        <dbReference type="Rhea" id="RHEA-COMP:11604"/>
        <dbReference type="ChEBI" id="CHEBI:15377"/>
        <dbReference type="ChEBI" id="CHEBI:29999"/>
        <dbReference type="ChEBI" id="CHEBI:43474"/>
        <dbReference type="ChEBI" id="CHEBI:83421"/>
        <dbReference type="EC" id="3.1.3.16"/>
    </reaction>
</comment>
<comment type="catalytic activity">
    <reaction>
        <text>O-phospho-L-threonyl-[protein] + H2O = L-threonyl-[protein] + phosphate</text>
        <dbReference type="Rhea" id="RHEA:47004"/>
        <dbReference type="Rhea" id="RHEA-COMP:11060"/>
        <dbReference type="Rhea" id="RHEA-COMP:11605"/>
        <dbReference type="ChEBI" id="CHEBI:15377"/>
        <dbReference type="ChEBI" id="CHEBI:30013"/>
        <dbReference type="ChEBI" id="CHEBI:43474"/>
        <dbReference type="ChEBI" id="CHEBI:61977"/>
        <dbReference type="EC" id="3.1.3.16"/>
    </reaction>
</comment>
<comment type="cofactor">
    <cofactor evidence="1">
        <name>a divalent metal cation</name>
        <dbReference type="ChEBI" id="CHEBI:60240"/>
    </cofactor>
    <text evidence="1">Binds 2 divalent metal cations.</text>
</comment>
<comment type="subcellular location">
    <subcellularLocation>
        <location evidence="1">Cytoplasm</location>
    </subcellularLocation>
</comment>
<comment type="similarity">
    <text evidence="3">Belongs to the metallophosphoesterase superfamily. CPPED1 family.</text>
</comment>
<accession>Q5RCR9</accession>
<sequence>MSAAEAGGVFHRARGRTLDAFPAEKESEWKGPFYFILGADPQFGLMKAWSTGDCDNGGDEWEQEIRLTEQAVQAINKLNPKPKFFVLCGDLIHAMPGKPWRTEQTEDLKRVLRTVDRAIPLVLVSGNHDIGNAPTAETVDEFCRTWGDDYFSFWVGGVLFLVLNSQFYENPSKCPSLKQAQDQWLDEQLSIARQRHCQHAIIFQHIPLFLESIDEDDDYYFNLSKSTRKKLADKFIHAGVKVVFSGHYHRNAGGTYQNLDMVVSSAIGCQLGRDPHGLRVVVVTAEKIVHRYYSLDELSEKGIEDDLMDLIKKK</sequence>
<evidence type="ECO:0000250" key="1"/>
<evidence type="ECO:0000250" key="2">
    <source>
        <dbReference type="UniProtKB" id="Q9BRF8"/>
    </source>
</evidence>
<evidence type="ECO:0000305" key="3"/>
<proteinExistence type="evidence at transcript level"/>
<reference key="1">
    <citation type="submission" date="2004-11" db="EMBL/GenBank/DDBJ databases">
        <authorList>
            <consortium name="The German cDNA consortium"/>
        </authorList>
    </citation>
    <scope>NUCLEOTIDE SEQUENCE [LARGE SCALE MRNA]</scope>
    <source>
        <tissue>Kidney</tissue>
    </source>
</reference>